<proteinExistence type="evidence at protein level"/>
<feature type="signal peptide" evidence="3">
    <location>
        <begin position="1"/>
        <end position="24"/>
    </location>
</feature>
<feature type="chain" id="PRO_5005127751" description="Dolichyl-diphosphooligosaccharide--protein glycosyltransferase subunit 1">
    <location>
        <begin position="25"/>
        <end position="607"/>
    </location>
</feature>
<feature type="topological domain" description="Lumenal" evidence="9">
    <location>
        <begin position="25"/>
        <end position="434"/>
    </location>
</feature>
<feature type="transmembrane region" description="Helical" evidence="7">
    <location>
        <begin position="435"/>
        <end position="455"/>
    </location>
</feature>
<feature type="topological domain" description="Cytoplasmic" evidence="9">
    <location>
        <begin position="456"/>
        <end position="607"/>
    </location>
</feature>
<feature type="modified residue" description="N6-acetyllysine" evidence="1">
    <location>
        <position position="187"/>
    </location>
</feature>
<feature type="modified residue" description="N6-acetyllysine; alternate" evidence="2">
    <location>
        <position position="538"/>
    </location>
</feature>
<feature type="glycosylation site" description="N-linked (GlcNAc...) asparagine" evidence="3">
    <location>
        <position position="299"/>
    </location>
</feature>
<feature type="cross-link" description="Glycyl lysine isopeptide (Lys-Gly) (interchain with G-Cter in SUMO2); alternate" evidence="1">
    <location>
        <position position="538"/>
    </location>
</feature>
<name>RPN1_CANLF</name>
<accession>E2RQ08</accession>
<evidence type="ECO:0000250" key="1">
    <source>
        <dbReference type="UniProtKB" id="P04843"/>
    </source>
</evidence>
<evidence type="ECO:0000250" key="2">
    <source>
        <dbReference type="UniProtKB" id="Q91YQ5"/>
    </source>
</evidence>
<evidence type="ECO:0000255" key="3"/>
<evidence type="ECO:0000269" key="4">
    <source>
    </source>
</evidence>
<evidence type="ECO:0000269" key="5">
    <source>
    </source>
</evidence>
<evidence type="ECO:0000269" key="6">
    <source>
    </source>
</evidence>
<evidence type="ECO:0000269" key="7">
    <source>
    </source>
</evidence>
<evidence type="ECO:0000305" key="8"/>
<evidence type="ECO:0000305" key="9">
    <source>
    </source>
</evidence>
<sequence length="607" mass="68577">MEVPTARLLLLLLLGAWAPAPESASPEAPLLVNEDVKRTVDLSSHLAKVTAEVVLAHPGGGSTARAASFLLALEPELEARLAHLGVQVKGEDEEENNLEVRETKIKGKSGRFFTVKLPVALDPGAKVSVVVETVYTHVLQPYPTQITQSEKQFVVFEGNHYFYSPYPTKTQTMRVKLASRNVESYTKLGNPTRSEDLLDYGPFRDIPAYSQDTFKVHYENNSPFLTITSMTRVIEVSHWGNIAVEENVDLKHTGAVLKGPFSRYDYQRQPDSGIASIRSFKTILPAAAQDVYYRDEIGNVSTSHLLILDDSVEMEIRPRFPLFGGWKTHYIVGYNLPSYEYLYNLGDQYALKMRFVDHVFDEQVIDSLTVKIILPEGAKNIQVDSPYEISRAPDELHYTYLDTFGRPVIVAYKKNLVEQHIQDIVVHYTFNKVLMLQEPLLVVAAFYILFFTVIIYVRLDFSITKDPAAEARMKVACITEQVLTLVNKRIGLYRHFDETINRYKQSRDVSTLNSGKKSLETEHKALTSEIASLQSRLKTEGSDLCDKVSEMQKLDAQVKELVLKSAVEAERLVAGKLKKDTYIENEKLISGKRQELVTKIDHILDAL</sequence>
<comment type="function">
    <text evidence="4">Subunit of the oligosaccharyl transferase (OST) complex that catalyzes the initial transfer of a defined glycan (Glc(3)Man(9)GlcNAc(2) in eukaryotes) from the lipid carrier dolichol-pyrophosphate to an asparagine residue within an Asn-X-Ser/Thr consensus motif in nascent polypeptide chains, the first step in protein N-glycosylation. N-glycosylation occurs cotranslationally and the complex associates with the Sec61 complex at the channel-forming translocon complex that mediates protein translocation across the endoplasmic reticulum (ER). All subunits are required for a maximal enzyme activity.</text>
</comment>
<comment type="pathway">
    <text evidence="1">Protein modification; protein glycosylation.</text>
</comment>
<comment type="subunit">
    <text evidence="2 4 5 6 7">Component of the oligosaccharyltransferase (OST) complex. OST exists in two different complex forms which contain common core subunits RPN1, RPN2, OST48, OST4, DAD1 and TMEM258, either STT3A or STT3B as catalytic subunits, and form-specific accessory subunits (PubMed:12887896, PubMed:15835887, PubMed:25135935). STT3A complex assembly occurs through the formation of 3 subcomplexes. Subcomplex 1 contains RPN1 and TMEM258, subcomplex 2 contains the STT3A-specific subunits STT3A, DC2/OSTC, and KCP2 as well as the core subunit OST4, and subcomplex 3 contains RPN2, DAD1, and OST48. The STT3A complex can form stable complexes with the Sec61 complex or with both the Sec61 and TRAP complexes (PubMed:29519914). Interacts with TMEM35A/NACHO (By similarity).</text>
</comment>
<comment type="subcellular location">
    <subcellularLocation>
        <location evidence="4 7">Endoplasmic reticulum membrane</location>
        <topology evidence="7">Single-pass type I membrane protein</topology>
    </subcellularLocation>
</comment>
<comment type="PTM">
    <text evidence="1">Ubiquitinated by the ECS(ASB11) complex.</text>
</comment>
<comment type="PTM">
    <text evidence="1">Ufmylated by UFL1 in response to endoplasmic reticulum stress, promoting reticulophagy of endoplasmic reticulum sheets.</text>
</comment>
<comment type="similarity">
    <text evidence="8">Belongs to the OST1 family.</text>
</comment>
<protein>
    <recommendedName>
        <fullName evidence="1">Dolichyl-diphosphooligosaccharide--protein glycosyltransferase subunit 1</fullName>
    </recommendedName>
    <alternativeName>
        <fullName>Ribophorin I</fullName>
        <shortName>RPN-I</shortName>
    </alternativeName>
    <alternativeName>
        <fullName>Ribophorin-1</fullName>
    </alternativeName>
</protein>
<reference key="1">
    <citation type="journal article" date="2005" name="Nature">
        <title>Genome sequence, comparative analysis and haplotype structure of the domestic dog.</title>
        <authorList>
            <person name="Lindblad-Toh K."/>
            <person name="Wade C.M."/>
            <person name="Mikkelsen T.S."/>
            <person name="Karlsson E.K."/>
            <person name="Jaffe D.B."/>
            <person name="Kamal M."/>
            <person name="Clamp M."/>
            <person name="Chang J.L."/>
            <person name="Kulbokas E.J. III"/>
            <person name="Zody M.C."/>
            <person name="Mauceli E."/>
            <person name="Xie X."/>
            <person name="Breen M."/>
            <person name="Wayne R.K."/>
            <person name="Ostrander E.A."/>
            <person name="Ponting C.P."/>
            <person name="Galibert F."/>
            <person name="Smith D.R."/>
            <person name="deJong P.J."/>
            <person name="Kirkness E.F."/>
            <person name="Alvarez P."/>
            <person name="Biagi T."/>
            <person name="Brockman W."/>
            <person name="Butler J."/>
            <person name="Chin C.-W."/>
            <person name="Cook A."/>
            <person name="Cuff J."/>
            <person name="Daly M.J."/>
            <person name="DeCaprio D."/>
            <person name="Gnerre S."/>
            <person name="Grabherr M."/>
            <person name="Kellis M."/>
            <person name="Kleber M."/>
            <person name="Bardeleben C."/>
            <person name="Goodstadt L."/>
            <person name="Heger A."/>
            <person name="Hitte C."/>
            <person name="Kim L."/>
            <person name="Koepfli K.-P."/>
            <person name="Parker H.G."/>
            <person name="Pollinger J.P."/>
            <person name="Searle S.M.J."/>
            <person name="Sutter N.B."/>
            <person name="Thomas R."/>
            <person name="Webber C."/>
            <person name="Baldwin J."/>
            <person name="Abebe A."/>
            <person name="Abouelleil A."/>
            <person name="Aftuck L."/>
            <person name="Ait-Zahra M."/>
            <person name="Aldredge T."/>
            <person name="Allen N."/>
            <person name="An P."/>
            <person name="Anderson S."/>
            <person name="Antoine C."/>
            <person name="Arachchi H."/>
            <person name="Aslam A."/>
            <person name="Ayotte L."/>
            <person name="Bachantsang P."/>
            <person name="Barry A."/>
            <person name="Bayul T."/>
            <person name="Benamara M."/>
            <person name="Berlin A."/>
            <person name="Bessette D."/>
            <person name="Blitshteyn B."/>
            <person name="Bloom T."/>
            <person name="Blye J."/>
            <person name="Boguslavskiy L."/>
            <person name="Bonnet C."/>
            <person name="Boukhgalter B."/>
            <person name="Brown A."/>
            <person name="Cahill P."/>
            <person name="Calixte N."/>
            <person name="Camarata J."/>
            <person name="Cheshatsang Y."/>
            <person name="Chu J."/>
            <person name="Citroen M."/>
            <person name="Collymore A."/>
            <person name="Cooke P."/>
            <person name="Dawoe T."/>
            <person name="Daza R."/>
            <person name="Decktor K."/>
            <person name="DeGray S."/>
            <person name="Dhargay N."/>
            <person name="Dooley K."/>
            <person name="Dooley K."/>
            <person name="Dorje P."/>
            <person name="Dorjee K."/>
            <person name="Dorris L."/>
            <person name="Duffey N."/>
            <person name="Dupes A."/>
            <person name="Egbiremolen O."/>
            <person name="Elong R."/>
            <person name="Falk J."/>
            <person name="Farina A."/>
            <person name="Faro S."/>
            <person name="Ferguson D."/>
            <person name="Ferreira P."/>
            <person name="Fisher S."/>
            <person name="FitzGerald M."/>
            <person name="Foley K."/>
            <person name="Foley C."/>
            <person name="Franke A."/>
            <person name="Friedrich D."/>
            <person name="Gage D."/>
            <person name="Garber M."/>
            <person name="Gearin G."/>
            <person name="Giannoukos G."/>
            <person name="Goode T."/>
            <person name="Goyette A."/>
            <person name="Graham J."/>
            <person name="Grandbois E."/>
            <person name="Gyaltsen K."/>
            <person name="Hafez N."/>
            <person name="Hagopian D."/>
            <person name="Hagos B."/>
            <person name="Hall J."/>
            <person name="Healy C."/>
            <person name="Hegarty R."/>
            <person name="Honan T."/>
            <person name="Horn A."/>
            <person name="Houde N."/>
            <person name="Hughes L."/>
            <person name="Hunnicutt L."/>
            <person name="Husby M."/>
            <person name="Jester B."/>
            <person name="Jones C."/>
            <person name="Kamat A."/>
            <person name="Kanga B."/>
            <person name="Kells C."/>
            <person name="Khazanovich D."/>
            <person name="Kieu A.C."/>
            <person name="Kisner P."/>
            <person name="Kumar M."/>
            <person name="Lance K."/>
            <person name="Landers T."/>
            <person name="Lara M."/>
            <person name="Lee W."/>
            <person name="Leger J.-P."/>
            <person name="Lennon N."/>
            <person name="Leuper L."/>
            <person name="LeVine S."/>
            <person name="Liu J."/>
            <person name="Liu X."/>
            <person name="Lokyitsang Y."/>
            <person name="Lokyitsang T."/>
            <person name="Lui A."/>
            <person name="Macdonald J."/>
            <person name="Major J."/>
            <person name="Marabella R."/>
            <person name="Maru K."/>
            <person name="Matthews C."/>
            <person name="McDonough S."/>
            <person name="Mehta T."/>
            <person name="Meldrim J."/>
            <person name="Melnikov A."/>
            <person name="Meneus L."/>
            <person name="Mihalev A."/>
            <person name="Mihova T."/>
            <person name="Miller K."/>
            <person name="Mittelman R."/>
            <person name="Mlenga V."/>
            <person name="Mulrain L."/>
            <person name="Munson G."/>
            <person name="Navidi A."/>
            <person name="Naylor J."/>
            <person name="Nguyen T."/>
            <person name="Nguyen N."/>
            <person name="Nguyen C."/>
            <person name="Nguyen T."/>
            <person name="Nicol R."/>
            <person name="Norbu N."/>
            <person name="Norbu C."/>
            <person name="Novod N."/>
            <person name="Nyima T."/>
            <person name="Olandt P."/>
            <person name="O'Neill B."/>
            <person name="O'Neill K."/>
            <person name="Osman S."/>
            <person name="Oyono L."/>
            <person name="Patti C."/>
            <person name="Perrin D."/>
            <person name="Phunkhang P."/>
            <person name="Pierre F."/>
            <person name="Priest M."/>
            <person name="Rachupka A."/>
            <person name="Raghuraman S."/>
            <person name="Rameau R."/>
            <person name="Ray V."/>
            <person name="Raymond C."/>
            <person name="Rege F."/>
            <person name="Rise C."/>
            <person name="Rogers J."/>
            <person name="Rogov P."/>
            <person name="Sahalie J."/>
            <person name="Settipalli S."/>
            <person name="Sharpe T."/>
            <person name="Shea T."/>
            <person name="Sheehan M."/>
            <person name="Sherpa N."/>
            <person name="Shi J."/>
            <person name="Shih D."/>
            <person name="Sloan J."/>
            <person name="Smith C."/>
            <person name="Sparrow T."/>
            <person name="Stalker J."/>
            <person name="Stange-Thomann N."/>
            <person name="Stavropoulos S."/>
            <person name="Stone C."/>
            <person name="Stone S."/>
            <person name="Sykes S."/>
            <person name="Tchuinga P."/>
            <person name="Tenzing P."/>
            <person name="Tesfaye S."/>
            <person name="Thoulutsang D."/>
            <person name="Thoulutsang Y."/>
            <person name="Topham K."/>
            <person name="Topping I."/>
            <person name="Tsamla T."/>
            <person name="Vassiliev H."/>
            <person name="Venkataraman V."/>
            <person name="Vo A."/>
            <person name="Wangchuk T."/>
            <person name="Wangdi T."/>
            <person name="Weiand M."/>
            <person name="Wilkinson J."/>
            <person name="Wilson A."/>
            <person name="Yadav S."/>
            <person name="Yang S."/>
            <person name="Yang X."/>
            <person name="Young G."/>
            <person name="Yu Q."/>
            <person name="Zainoun J."/>
            <person name="Zembek L."/>
            <person name="Zimmer A."/>
            <person name="Lander E.S."/>
        </authorList>
    </citation>
    <scope>NUCLEOTIDE SEQUENCE [LARGE SCALE GENOMIC DNA]</scope>
    <source>
        <strain>Boxer</strain>
    </source>
</reference>
<reference key="2">
    <citation type="journal article" date="2003" name="Mol. Cell">
        <title>Oligosaccharyltransferase isoforms that contain different catalytic STT3 subunits have distinct enzymatic properties.</title>
        <authorList>
            <person name="Kelleher D.J."/>
            <person name="Karaoglu D."/>
            <person name="Mandon E.C."/>
            <person name="Gilmore R."/>
        </authorList>
    </citation>
    <scope>IDENTIFICATION IN THE OLIGOSACCHARYLTRANSFERASE (OST) COMPLEX</scope>
    <scope>FUNCTION OF THE OLIGOSACCHARYLTRANSFERASE (OST) COMPLEX</scope>
    <scope>SUBCELLULAR LOCATION</scope>
</reference>
<reference key="3">
    <citation type="journal article" date="2005" name="Biochemistry">
        <title>Proteomic analysis of mammalian oligosaccharyltransferase reveals multiple subcomplexes that contain Sec61, TRAP, and two potential new subunits.</title>
        <authorList>
            <person name="Shibatani T."/>
            <person name="David L.L."/>
            <person name="McCormack A.L."/>
            <person name="Frueh K."/>
            <person name="Skach W.R."/>
        </authorList>
    </citation>
    <scope>IDENTIFICATION IN THE OLIGOSACCHARYLTRANSFERASE (OST) COMPLEX</scope>
</reference>
<reference key="4">
    <citation type="journal article" date="2014" name="J. Cell Biol.">
        <title>Oxidoreductase activity is necessary for N-glycosylation of cysteine-proximal acceptor sites in glycoproteins.</title>
        <authorList>
            <person name="Cherepanova N.A."/>
            <person name="Shrimal S."/>
            <person name="Gilmore R."/>
        </authorList>
    </citation>
    <scope>IDENTIFICATION IN THE OLIGOSACCHARYLTRANSFERASE (OST) COMPLEX</scope>
</reference>
<reference key="5">
    <citation type="journal article" date="2018" name="Science">
        <title>Structural basis for coupling protein transport and N-glycosylation at the mammalian endoplasmic reticulum.</title>
        <authorList>
            <person name="Braunger K."/>
            <person name="Pfeffer S."/>
            <person name="Shrimal S."/>
            <person name="Gilmore R."/>
            <person name="Berninghausen O."/>
            <person name="Mandon E.C."/>
            <person name="Becker T."/>
            <person name="Foerster F."/>
            <person name="Beckmann R."/>
        </authorList>
    </citation>
    <scope>STRUCTURE BY ELECTRON MICROSCOPY (4.20 ANGSTROMS) OF 438-573</scope>
</reference>
<gene>
    <name evidence="1" type="primary">RPN1</name>
</gene>
<keyword id="KW-0002">3D-structure</keyword>
<keyword id="KW-0007">Acetylation</keyword>
<keyword id="KW-0256">Endoplasmic reticulum</keyword>
<keyword id="KW-0325">Glycoprotein</keyword>
<keyword id="KW-1017">Isopeptide bond</keyword>
<keyword id="KW-0472">Membrane</keyword>
<keyword id="KW-1185">Reference proteome</keyword>
<keyword id="KW-0732">Signal</keyword>
<keyword id="KW-0812">Transmembrane</keyword>
<keyword id="KW-1133">Transmembrane helix</keyword>
<keyword id="KW-0832">Ubl conjugation</keyword>
<organism>
    <name type="scientific">Canis lupus familiaris</name>
    <name type="common">Dog</name>
    <name type="synonym">Canis familiaris</name>
    <dbReference type="NCBI Taxonomy" id="9615"/>
    <lineage>
        <taxon>Eukaryota</taxon>
        <taxon>Metazoa</taxon>
        <taxon>Chordata</taxon>
        <taxon>Craniata</taxon>
        <taxon>Vertebrata</taxon>
        <taxon>Euteleostomi</taxon>
        <taxon>Mammalia</taxon>
        <taxon>Eutheria</taxon>
        <taxon>Laurasiatheria</taxon>
        <taxon>Carnivora</taxon>
        <taxon>Caniformia</taxon>
        <taxon>Canidae</taxon>
        <taxon>Canis</taxon>
    </lineage>
</organism>
<dbReference type="EMBL" id="AAEX03012018">
    <property type="status" value="NOT_ANNOTATED_CDS"/>
    <property type="molecule type" value="Genomic_DNA"/>
</dbReference>
<dbReference type="RefSeq" id="XP_038282692.1">
    <property type="nucleotide sequence ID" value="XM_038426764.1"/>
</dbReference>
<dbReference type="RefSeq" id="XP_038421410.1">
    <property type="nucleotide sequence ID" value="XM_038565482.1"/>
</dbReference>
<dbReference type="RefSeq" id="XP_848830.1">
    <property type="nucleotide sequence ID" value="XM_843737.6"/>
</dbReference>
<dbReference type="PDB" id="6FTG">
    <property type="method" value="EM"/>
    <property type="resolution" value="9.10 A"/>
    <property type="chains" value="1=438-459"/>
</dbReference>
<dbReference type="PDB" id="6FTI">
    <property type="method" value="EM"/>
    <property type="resolution" value="4.20 A"/>
    <property type="chains" value="1=438-476"/>
</dbReference>
<dbReference type="PDB" id="6FTJ">
    <property type="method" value="EM"/>
    <property type="resolution" value="4.70 A"/>
    <property type="chains" value="1=438-573"/>
</dbReference>
<dbReference type="PDBsum" id="6FTG"/>
<dbReference type="PDBsum" id="6FTI"/>
<dbReference type="PDBsum" id="6FTJ"/>
<dbReference type="EMDB" id="EMD-4317"/>
<dbReference type="SMR" id="E2RQ08"/>
<dbReference type="CORUM" id="E2RQ08"/>
<dbReference type="FunCoup" id="E2RQ08">
    <property type="interactions" value="3052"/>
</dbReference>
<dbReference type="STRING" id="9615.ENSCAFP00000006175"/>
<dbReference type="GlyCosmos" id="E2RQ08">
    <property type="glycosylation" value="1 site, No reported glycans"/>
</dbReference>
<dbReference type="PaxDb" id="9612-ENSCAFP00000006175"/>
<dbReference type="Ensembl" id="ENSCAFT00030025258.1">
    <property type="protein sequence ID" value="ENSCAFP00030022058.1"/>
    <property type="gene ID" value="ENSCAFG00030013592.1"/>
</dbReference>
<dbReference type="Ensembl" id="ENSCAFT00845033627.1">
    <property type="protein sequence ID" value="ENSCAFP00845026327.1"/>
    <property type="gene ID" value="ENSCAFG00845019047.1"/>
</dbReference>
<dbReference type="GeneID" id="476516"/>
<dbReference type="KEGG" id="cfa:476516"/>
<dbReference type="CTD" id="6184"/>
<dbReference type="VEuPathDB" id="HostDB:ENSCAFG00845019047"/>
<dbReference type="eggNOG" id="KOG2291">
    <property type="taxonomic scope" value="Eukaryota"/>
</dbReference>
<dbReference type="GeneTree" id="ENSGT00390000009630"/>
<dbReference type="HOGENOM" id="CLU_031381_2_0_1"/>
<dbReference type="InParanoid" id="E2RQ08"/>
<dbReference type="OMA" id="RYEYARE"/>
<dbReference type="OrthoDB" id="310030at2759"/>
<dbReference type="TreeFam" id="TF312988"/>
<dbReference type="UniPathway" id="UPA00378"/>
<dbReference type="Proteomes" id="UP000002254">
    <property type="component" value="Unplaced"/>
</dbReference>
<dbReference type="Proteomes" id="UP000694429">
    <property type="component" value="Chromosome 20"/>
</dbReference>
<dbReference type="Proteomes" id="UP000694542">
    <property type="component" value="Unplaced"/>
</dbReference>
<dbReference type="Proteomes" id="UP000805418">
    <property type="component" value="Chromosome 20"/>
</dbReference>
<dbReference type="GO" id="GO:0005829">
    <property type="term" value="C:cytosol"/>
    <property type="evidence" value="ECO:0007669"/>
    <property type="project" value="Ensembl"/>
</dbReference>
<dbReference type="GO" id="GO:0008250">
    <property type="term" value="C:oligosaccharyltransferase complex"/>
    <property type="evidence" value="ECO:0000314"/>
    <property type="project" value="UniProtKB"/>
</dbReference>
<dbReference type="GO" id="GO:0160226">
    <property type="term" value="C:oligosaccharyltransferase complex A"/>
    <property type="evidence" value="ECO:0007669"/>
    <property type="project" value="Ensembl"/>
</dbReference>
<dbReference type="GO" id="GO:0160227">
    <property type="term" value="C:oligosaccharyltransferase complex B"/>
    <property type="evidence" value="ECO:0007669"/>
    <property type="project" value="Ensembl"/>
</dbReference>
<dbReference type="GO" id="GO:0005791">
    <property type="term" value="C:rough endoplasmic reticulum"/>
    <property type="evidence" value="ECO:0007669"/>
    <property type="project" value="Ensembl"/>
</dbReference>
<dbReference type="GO" id="GO:0006486">
    <property type="term" value="P:protein glycosylation"/>
    <property type="evidence" value="ECO:0000314"/>
    <property type="project" value="UniProtKB"/>
</dbReference>
<dbReference type="GO" id="GO:0018279">
    <property type="term" value="P:protein N-linked glycosylation via asparagine"/>
    <property type="evidence" value="ECO:0000318"/>
    <property type="project" value="GO_Central"/>
</dbReference>
<dbReference type="InterPro" id="IPR007676">
    <property type="entry name" value="Ribophorin_I"/>
</dbReference>
<dbReference type="PANTHER" id="PTHR21049:SF0">
    <property type="entry name" value="DOLICHYL-DIPHOSPHOOLIGOSACCHARIDE--PROTEIN GLYCOSYLTRANSFERASE SUBUNIT 1"/>
    <property type="match status" value="1"/>
</dbReference>
<dbReference type="PANTHER" id="PTHR21049">
    <property type="entry name" value="RIBOPHORIN I"/>
    <property type="match status" value="1"/>
</dbReference>
<dbReference type="Pfam" id="PF04597">
    <property type="entry name" value="Ribophorin_I"/>
    <property type="match status" value="1"/>
</dbReference>